<evidence type="ECO:0000250" key="1">
    <source>
        <dbReference type="UniProtKB" id="P07649"/>
    </source>
</evidence>
<evidence type="ECO:0000250" key="2">
    <source>
        <dbReference type="UniProtKB" id="Q12211"/>
    </source>
</evidence>
<evidence type="ECO:0000256" key="3">
    <source>
        <dbReference type="SAM" id="MobiDB-lite"/>
    </source>
</evidence>
<evidence type="ECO:0000305" key="4"/>
<dbReference type="EC" id="5.4.99.-" evidence="2"/>
<dbReference type="EMBL" id="CP017628">
    <property type="protein sequence ID" value="AOW30170.1"/>
    <property type="molecule type" value="Genomic_DNA"/>
</dbReference>
<dbReference type="RefSeq" id="XP_019331009.1">
    <property type="nucleotide sequence ID" value="XM_019475464.1"/>
</dbReference>
<dbReference type="SMR" id="Q59S63"/>
<dbReference type="BioGRID" id="1228947">
    <property type="interactions" value="1"/>
</dbReference>
<dbReference type="FunCoup" id="Q59S63">
    <property type="interactions" value="1058"/>
</dbReference>
<dbReference type="STRING" id="237561.Q59S63"/>
<dbReference type="EnsemblFungi" id="C6_02350C_A-T">
    <property type="protein sequence ID" value="C6_02350C_A-T-p1"/>
    <property type="gene ID" value="C6_02350C_A"/>
</dbReference>
<dbReference type="GeneID" id="3645881"/>
<dbReference type="KEGG" id="cal:CAALFM_C602350CA"/>
<dbReference type="CGD" id="CAL0000183350">
    <property type="gene designation" value="orf19.10981"/>
</dbReference>
<dbReference type="VEuPathDB" id="FungiDB:C6_02350C_A"/>
<dbReference type="eggNOG" id="KOG2553">
    <property type="taxonomic scope" value="Eukaryota"/>
</dbReference>
<dbReference type="HOGENOM" id="CLU_021971_0_0_1"/>
<dbReference type="InParanoid" id="Q59S63"/>
<dbReference type="OMA" id="NKAFDCR"/>
<dbReference type="OrthoDB" id="10256309at2759"/>
<dbReference type="Proteomes" id="UP000000559">
    <property type="component" value="Chromosome 6"/>
</dbReference>
<dbReference type="GO" id="GO:0005634">
    <property type="term" value="C:nucleus"/>
    <property type="evidence" value="ECO:0000318"/>
    <property type="project" value="GO_Central"/>
</dbReference>
<dbReference type="GO" id="GO:0046872">
    <property type="term" value="F:metal ion binding"/>
    <property type="evidence" value="ECO:0007669"/>
    <property type="project" value="UniProtKB-KW"/>
</dbReference>
<dbReference type="GO" id="GO:0009982">
    <property type="term" value="F:pseudouridine synthase activity"/>
    <property type="evidence" value="ECO:0000318"/>
    <property type="project" value="GO_Central"/>
</dbReference>
<dbReference type="GO" id="GO:0003723">
    <property type="term" value="F:RNA binding"/>
    <property type="evidence" value="ECO:0007669"/>
    <property type="project" value="InterPro"/>
</dbReference>
<dbReference type="GO" id="GO:0106032">
    <property type="term" value="F:snRNA pseudouridine synthase activity"/>
    <property type="evidence" value="ECO:0007669"/>
    <property type="project" value="RHEA"/>
</dbReference>
<dbReference type="GO" id="GO:0106029">
    <property type="term" value="F:tRNA pseudouridine synthase activity"/>
    <property type="evidence" value="ECO:0007669"/>
    <property type="project" value="RHEA"/>
</dbReference>
<dbReference type="GO" id="GO:0006397">
    <property type="term" value="P:mRNA processing"/>
    <property type="evidence" value="ECO:0007669"/>
    <property type="project" value="UniProtKB-KW"/>
</dbReference>
<dbReference type="GO" id="GO:1990481">
    <property type="term" value="P:mRNA pseudouridine synthesis"/>
    <property type="evidence" value="ECO:0000318"/>
    <property type="project" value="GO_Central"/>
</dbReference>
<dbReference type="GO" id="GO:0031119">
    <property type="term" value="P:tRNA pseudouridine synthesis"/>
    <property type="evidence" value="ECO:0000318"/>
    <property type="project" value="GO_Central"/>
</dbReference>
<dbReference type="CDD" id="cd02568">
    <property type="entry name" value="PseudoU_synth_PUS1_PUS2"/>
    <property type="match status" value="1"/>
</dbReference>
<dbReference type="FunFam" id="3.30.70.580:FF:000002">
    <property type="entry name" value="tRNA pseudouridine synthase"/>
    <property type="match status" value="1"/>
</dbReference>
<dbReference type="FunFam" id="3.30.70.660:FF:000002">
    <property type="entry name" value="tRNA pseudouridine synthase"/>
    <property type="match status" value="1"/>
</dbReference>
<dbReference type="Gene3D" id="3.30.70.660">
    <property type="entry name" value="Pseudouridine synthase I, catalytic domain, C-terminal subdomain"/>
    <property type="match status" value="1"/>
</dbReference>
<dbReference type="Gene3D" id="3.30.70.580">
    <property type="entry name" value="Pseudouridine synthase I, catalytic domain, N-terminal subdomain"/>
    <property type="match status" value="1"/>
</dbReference>
<dbReference type="InterPro" id="IPR020103">
    <property type="entry name" value="PsdUridine_synth_cat_dom_sf"/>
</dbReference>
<dbReference type="InterPro" id="IPR001406">
    <property type="entry name" value="PsdUridine_synth_TruA"/>
</dbReference>
<dbReference type="InterPro" id="IPR020097">
    <property type="entry name" value="PsdUridine_synth_TruA_a/b_dom"/>
</dbReference>
<dbReference type="InterPro" id="IPR020095">
    <property type="entry name" value="PsdUridine_synth_TruA_C"/>
</dbReference>
<dbReference type="InterPro" id="IPR041708">
    <property type="entry name" value="PUS1/PUS2-like"/>
</dbReference>
<dbReference type="InterPro" id="IPR020094">
    <property type="entry name" value="TruA/RsuA/RluB/E/F_N"/>
</dbReference>
<dbReference type="NCBIfam" id="TIGR00071">
    <property type="entry name" value="hisT_truA"/>
    <property type="match status" value="1"/>
</dbReference>
<dbReference type="PANTHER" id="PTHR11142">
    <property type="entry name" value="PSEUDOURIDYLATE SYNTHASE"/>
    <property type="match status" value="1"/>
</dbReference>
<dbReference type="PANTHER" id="PTHR11142:SF4">
    <property type="entry name" value="PSEUDOURIDYLATE SYNTHASE 1 HOMOLOG"/>
    <property type="match status" value="1"/>
</dbReference>
<dbReference type="Pfam" id="PF01416">
    <property type="entry name" value="PseudoU_synth_1"/>
    <property type="match status" value="1"/>
</dbReference>
<dbReference type="SUPFAM" id="SSF55120">
    <property type="entry name" value="Pseudouridine synthase"/>
    <property type="match status" value="1"/>
</dbReference>
<gene>
    <name type="primary">PUS1</name>
    <name type="ordered locus">CAALFM_C602350CA</name>
    <name type="ORF">CaO19.10981</name>
    <name type="ORF">CaO19.3477</name>
</gene>
<proteinExistence type="inferred from homology"/>
<name>PUS1_CANAL</name>
<comment type="function">
    <text evidence="2">Formation of pseudouridine at positions 27 and 28 in the anticodon stem and loop of transfer RNAs; at positions 34 and 36 of intron-containing precursor tRNA(Ile) and at position 35 in the intron-containing tRNA(Tyr). Catalyzes pseudouridylation at position 44 in U2 snRNA. Also catalyzes pseudouridylation of mRNAs.</text>
</comment>
<comment type="catalytic activity">
    <reaction evidence="2">
        <text>a uridine in tRNA = a pseudouridine in tRNA</text>
        <dbReference type="Rhea" id="RHEA:54572"/>
        <dbReference type="Rhea" id="RHEA-COMP:13339"/>
        <dbReference type="Rhea" id="RHEA-COMP:13934"/>
        <dbReference type="ChEBI" id="CHEBI:65314"/>
        <dbReference type="ChEBI" id="CHEBI:65315"/>
    </reaction>
</comment>
<comment type="catalytic activity">
    <reaction evidence="2">
        <text>uridine in snRNA = pseudouridine in snRNA</text>
        <dbReference type="Rhea" id="RHEA:51124"/>
        <dbReference type="Rhea" id="RHEA-COMP:12891"/>
        <dbReference type="Rhea" id="RHEA-COMP:12892"/>
        <dbReference type="ChEBI" id="CHEBI:65314"/>
        <dbReference type="ChEBI" id="CHEBI:65315"/>
    </reaction>
</comment>
<comment type="catalytic activity">
    <reaction evidence="2">
        <text>a uridine in mRNA = a pseudouridine in mRNA</text>
        <dbReference type="Rhea" id="RHEA:56644"/>
        <dbReference type="Rhea" id="RHEA-COMP:14658"/>
        <dbReference type="Rhea" id="RHEA-COMP:14659"/>
        <dbReference type="ChEBI" id="CHEBI:65314"/>
        <dbReference type="ChEBI" id="CHEBI:65315"/>
    </reaction>
</comment>
<comment type="cofactor">
    <cofactor evidence="2">
        <name>Zn(2+)</name>
        <dbReference type="ChEBI" id="CHEBI:29105"/>
    </cofactor>
    <text evidence="2">Binds 1 zinc ion per subunit.</text>
</comment>
<comment type="subcellular location">
    <subcellularLocation>
        <location evidence="2">Nucleus</location>
    </subcellularLocation>
</comment>
<comment type="similarity">
    <text evidence="4">Belongs to the tRNA pseudouridine synthase TruA family.</text>
</comment>
<feature type="chain" id="PRO_0000057525" description="tRNA pseudouridine synthase 1">
    <location>
        <begin position="1"/>
        <end position="612"/>
    </location>
</feature>
<feature type="region of interest" description="Disordered" evidence="3">
    <location>
        <begin position="1"/>
        <end position="21"/>
    </location>
</feature>
<feature type="region of interest" description="Disordered" evidence="3">
    <location>
        <begin position="64"/>
        <end position="122"/>
    </location>
</feature>
<feature type="region of interest" description="Disordered" evidence="3">
    <location>
        <begin position="330"/>
        <end position="352"/>
    </location>
</feature>
<feature type="region of interest" description="Disordered" evidence="3">
    <location>
        <begin position="583"/>
        <end position="612"/>
    </location>
</feature>
<feature type="compositionally biased region" description="Polar residues" evidence="3">
    <location>
        <begin position="64"/>
        <end position="82"/>
    </location>
</feature>
<feature type="compositionally biased region" description="Low complexity" evidence="3">
    <location>
        <begin position="83"/>
        <end position="97"/>
    </location>
</feature>
<feature type="compositionally biased region" description="Basic and acidic residues" evidence="3">
    <location>
        <begin position="111"/>
        <end position="122"/>
    </location>
</feature>
<feature type="compositionally biased region" description="Low complexity" evidence="3">
    <location>
        <begin position="336"/>
        <end position="347"/>
    </location>
</feature>
<feature type="active site" description="Nucleophile" evidence="1">
    <location>
        <position position="210"/>
    </location>
</feature>
<protein>
    <recommendedName>
        <fullName>tRNA pseudouridine synthase 1</fullName>
        <ecNumber evidence="2">5.4.99.-</ecNumber>
    </recommendedName>
    <alternativeName>
        <fullName>tRNA pseudouridylate synthase 1</fullName>
    </alternativeName>
    <alternativeName>
        <fullName>tRNA-uridine isomerase 1</fullName>
    </alternativeName>
</protein>
<organism>
    <name type="scientific">Candida albicans (strain SC5314 / ATCC MYA-2876)</name>
    <name type="common">Yeast</name>
    <dbReference type="NCBI Taxonomy" id="237561"/>
    <lineage>
        <taxon>Eukaryota</taxon>
        <taxon>Fungi</taxon>
        <taxon>Dikarya</taxon>
        <taxon>Ascomycota</taxon>
        <taxon>Saccharomycotina</taxon>
        <taxon>Pichiomycetes</taxon>
        <taxon>Debaryomycetaceae</taxon>
        <taxon>Candida/Lodderomyces clade</taxon>
        <taxon>Candida</taxon>
    </lineage>
</organism>
<keyword id="KW-0413">Isomerase</keyword>
<keyword id="KW-0479">Metal-binding</keyword>
<keyword id="KW-0507">mRNA processing</keyword>
<keyword id="KW-0539">Nucleus</keyword>
<keyword id="KW-1185">Reference proteome</keyword>
<keyword id="KW-0819">tRNA processing</keyword>
<keyword id="KW-0862">Zinc</keyword>
<sequence length="612" mass="70099">MGDKFSVPTNQSKERQPIVKKKKKKKRTNIYSYILIISFPVIDQFQMSESLNIQELTDNSSIIPIPTESTDVQDVTSVSNKDTTTTTTTTTTTTESTTRVRKSSPSPSANENDKKRLKKEFQPRQKIEYTPLVDENGQPIPKAPRKPKRKVAVMLGYCGTGYNGMQVQNDPNVKTIEKDIYDAMATAGAISAENAVDLKKSGFQRAARTDKGVHAAGNVISLKMIIEDPEIINKINDLLPKQIRIWGIQRTTKGFDCRKCCSSRIYEYLLPTFSLLPPKPKSVLSELVKEKKLENPDLFEDDQEGIDWWENVKSKILASGITQEQIDSITSSYDEQQQQQQQQQQQQADEEERDISELSFTKLIKQIKTIENQSRRSYRISSSRLQHFREVMKQYEGTHNFHNFTVGKPFKDTSANRFMIKTIVSDPFVIEGTEWISIKIHGQSFMLHQIRKMIAMAALVVRLSLPCGIINNFFQSTKINIPKAPALGLLLENPVFDGYNIKLTKSDYEPIDFTKFDKEMNEFKMKYIYDKIYAEESKENIFYGFFGYIDAYRGNKNEDGEPIQNGASIFDFLFNYTERVENTKNKDAKNTSKTEESKPEESKPEESKSEQS</sequence>
<accession>Q59S63</accession>
<accession>A0A1D8PPW4</accession>
<reference key="1">
    <citation type="journal article" date="2004" name="Proc. Natl. Acad. Sci. U.S.A.">
        <title>The diploid genome sequence of Candida albicans.</title>
        <authorList>
            <person name="Jones T."/>
            <person name="Federspiel N.A."/>
            <person name="Chibana H."/>
            <person name="Dungan J."/>
            <person name="Kalman S."/>
            <person name="Magee B.B."/>
            <person name="Newport G."/>
            <person name="Thorstenson Y.R."/>
            <person name="Agabian N."/>
            <person name="Magee P.T."/>
            <person name="Davis R.W."/>
            <person name="Scherer S."/>
        </authorList>
    </citation>
    <scope>NUCLEOTIDE SEQUENCE [LARGE SCALE GENOMIC DNA]</scope>
    <source>
        <strain>SC5314 / ATCC MYA-2876</strain>
    </source>
</reference>
<reference key="2">
    <citation type="journal article" date="2007" name="Genome Biol.">
        <title>Assembly of the Candida albicans genome into sixteen supercontigs aligned on the eight chromosomes.</title>
        <authorList>
            <person name="van het Hoog M."/>
            <person name="Rast T.J."/>
            <person name="Martchenko M."/>
            <person name="Grindle S."/>
            <person name="Dignard D."/>
            <person name="Hogues H."/>
            <person name="Cuomo C."/>
            <person name="Berriman M."/>
            <person name="Scherer S."/>
            <person name="Magee B.B."/>
            <person name="Whiteway M."/>
            <person name="Chibana H."/>
            <person name="Nantel A."/>
            <person name="Magee P.T."/>
        </authorList>
    </citation>
    <scope>GENOME REANNOTATION</scope>
    <source>
        <strain>SC5314 / ATCC MYA-2876</strain>
    </source>
</reference>
<reference key="3">
    <citation type="journal article" date="2013" name="Genome Biol.">
        <title>Assembly of a phased diploid Candida albicans genome facilitates allele-specific measurements and provides a simple model for repeat and indel structure.</title>
        <authorList>
            <person name="Muzzey D."/>
            <person name="Schwartz K."/>
            <person name="Weissman J.S."/>
            <person name="Sherlock G."/>
        </authorList>
    </citation>
    <scope>NUCLEOTIDE SEQUENCE [LARGE SCALE GENOMIC DNA]</scope>
    <scope>GENOME REANNOTATION</scope>
    <source>
        <strain>SC5314 / ATCC MYA-2876</strain>
    </source>
</reference>